<dbReference type="EMBL" id="BC082863">
    <property type="protein sequence ID" value="AAH82863.1"/>
    <property type="molecule type" value="mRNA"/>
</dbReference>
<dbReference type="RefSeq" id="NP_001088066.1">
    <property type="nucleotide sequence ID" value="NM_001094597.1"/>
</dbReference>
<dbReference type="SMR" id="Q63ZP7"/>
<dbReference type="GeneID" id="494761"/>
<dbReference type="KEGG" id="xla:494761"/>
<dbReference type="AGR" id="Xenbase:XB-GENE-6078659"/>
<dbReference type="CTD" id="494761"/>
<dbReference type="Xenbase" id="XB-GENE-6078659">
    <property type="gene designation" value="dcaf12.L"/>
</dbReference>
<dbReference type="OrthoDB" id="9610195at2759"/>
<dbReference type="UniPathway" id="UPA00143"/>
<dbReference type="Proteomes" id="UP000186698">
    <property type="component" value="Chromosome 1L"/>
</dbReference>
<dbReference type="Bgee" id="494761">
    <property type="expression patterns" value="Expressed in egg cell and 19 other cell types or tissues"/>
</dbReference>
<dbReference type="GO" id="GO:0005813">
    <property type="term" value="C:centrosome"/>
    <property type="evidence" value="ECO:0007669"/>
    <property type="project" value="UniProtKB-SubCell"/>
</dbReference>
<dbReference type="GO" id="GO:0080008">
    <property type="term" value="C:Cul4-RING E3 ubiquitin ligase complex"/>
    <property type="evidence" value="ECO:0000250"/>
    <property type="project" value="UniProtKB"/>
</dbReference>
<dbReference type="GO" id="GO:0005737">
    <property type="term" value="C:cytoplasm"/>
    <property type="evidence" value="ECO:0007669"/>
    <property type="project" value="UniProtKB-SubCell"/>
</dbReference>
<dbReference type="GO" id="GO:0005634">
    <property type="term" value="C:nucleus"/>
    <property type="evidence" value="ECO:0007669"/>
    <property type="project" value="UniProtKB-SubCell"/>
</dbReference>
<dbReference type="GO" id="GO:1990756">
    <property type="term" value="F:ubiquitin-like ligase-substrate adaptor activity"/>
    <property type="evidence" value="ECO:0000250"/>
    <property type="project" value="UniProtKB"/>
</dbReference>
<dbReference type="GO" id="GO:0016567">
    <property type="term" value="P:protein ubiquitination"/>
    <property type="evidence" value="ECO:0007669"/>
    <property type="project" value="UniProtKB-UniPathway"/>
</dbReference>
<dbReference type="GO" id="GO:0010506">
    <property type="term" value="P:regulation of autophagy"/>
    <property type="evidence" value="ECO:0000250"/>
    <property type="project" value="UniProtKB"/>
</dbReference>
<dbReference type="GO" id="GO:0140627">
    <property type="term" value="P:ubiquitin-dependent protein catabolic process via the C-end degron rule pathway"/>
    <property type="evidence" value="ECO:0000250"/>
    <property type="project" value="UniProtKB"/>
</dbReference>
<dbReference type="FunFam" id="2.130.10.10:FF:001190">
    <property type="entry name" value="DDB1 and CUL4 associated factor 12"/>
    <property type="match status" value="1"/>
</dbReference>
<dbReference type="FunFam" id="2.130.10.10:FF:000253">
    <property type="entry name" value="DDB1- and CUL4-associated factor 12"/>
    <property type="match status" value="1"/>
</dbReference>
<dbReference type="Gene3D" id="2.130.10.10">
    <property type="entry name" value="YVTN repeat-like/Quinoprotein amine dehydrogenase"/>
    <property type="match status" value="2"/>
</dbReference>
<dbReference type="InterPro" id="IPR056151">
    <property type="entry name" value="Beta-prop_DCAF12"/>
</dbReference>
<dbReference type="InterPro" id="IPR051191">
    <property type="entry name" value="DCAF12"/>
</dbReference>
<dbReference type="InterPro" id="IPR015943">
    <property type="entry name" value="WD40/YVTN_repeat-like_dom_sf"/>
</dbReference>
<dbReference type="InterPro" id="IPR019775">
    <property type="entry name" value="WD40_repeat_CS"/>
</dbReference>
<dbReference type="InterPro" id="IPR036322">
    <property type="entry name" value="WD40_repeat_dom_sf"/>
</dbReference>
<dbReference type="InterPro" id="IPR001680">
    <property type="entry name" value="WD40_rpt"/>
</dbReference>
<dbReference type="PANTHER" id="PTHR19860:SF16">
    <property type="entry name" value="DDB1- AND CUL4-ASSOCIATED FACTOR 12"/>
    <property type="match status" value="1"/>
</dbReference>
<dbReference type="PANTHER" id="PTHR19860">
    <property type="entry name" value="DDB1- AND CUL4-ASSOCIATED FACTOR 12-RELATED"/>
    <property type="match status" value="1"/>
</dbReference>
<dbReference type="Pfam" id="PF23760">
    <property type="entry name" value="Beta-prop_DCAF12"/>
    <property type="match status" value="1"/>
</dbReference>
<dbReference type="SMART" id="SM00320">
    <property type="entry name" value="WD40"/>
    <property type="match status" value="4"/>
</dbReference>
<dbReference type="SUPFAM" id="SSF50978">
    <property type="entry name" value="WD40 repeat-like"/>
    <property type="match status" value="1"/>
</dbReference>
<dbReference type="PROSITE" id="PS00678">
    <property type="entry name" value="WD_REPEATS_1"/>
    <property type="match status" value="1"/>
</dbReference>
<dbReference type="PROSITE" id="PS50082">
    <property type="entry name" value="WD_REPEATS_2"/>
    <property type="match status" value="1"/>
</dbReference>
<dbReference type="PROSITE" id="PS50294">
    <property type="entry name" value="WD_REPEATS_REGION"/>
    <property type="match status" value="1"/>
</dbReference>
<feature type="chain" id="PRO_0000306845" description="DDB1- and CUL4-associated factor 12-A">
    <location>
        <begin position="1"/>
        <end position="446"/>
    </location>
</feature>
<feature type="repeat" description="WD 1">
    <location>
        <begin position="132"/>
        <end position="173"/>
    </location>
</feature>
<feature type="repeat" description="WD 2">
    <location>
        <begin position="177"/>
        <end position="215"/>
    </location>
</feature>
<feature type="repeat" description="WD 3">
    <location>
        <begin position="245"/>
        <end position="284"/>
    </location>
</feature>
<feature type="repeat" description="WD 4">
    <location>
        <begin position="333"/>
        <end position="370"/>
    </location>
</feature>
<feature type="region of interest" description="Disordered" evidence="2">
    <location>
        <begin position="1"/>
        <end position="32"/>
    </location>
</feature>
<feature type="compositionally biased region" description="Basic residues" evidence="2">
    <location>
        <begin position="1"/>
        <end position="12"/>
    </location>
</feature>
<sequence length="446" mass="49611">MTRRSVSRKRRANPGSGPGEQSDWDHSAHKRKRLPPEKKSLVFYLKSRELKPHNDSTYLHLLRGHAACTLPSILSEREFHLGNLNKVFASQWLNHRQVVCGTKCNTLFVVDVQTGQITRIPILKDREPINGSHQSCGIHAIEINPSRTLLATGGDNPNSIAVYRLPTLDPVCVGDGGHNDWIFSIAWISDTMAVSGSRDGSMGLWEMTDEVVNKSDFQHGLSRVPVYSHISHKALKDIPKESSNPVNCKVRALAFNSNNKELGAVSLDGFFHLWKAEQTLSKLLSTKLPYCRENVCLAYGLEWSLYAVGSQAHVSFLDPRQPPHCAKSVYCREQGSGIRSVSFYEHIVTVGTGQGALLFYDIRAQRFLEDSTGNCRNAKKKGDTLKLSTGKGWLNHNEMWLNYFSDIDCCPNAVYTHCYDSSGTKLFVAGGPLPTGLHGNYAGLWS</sequence>
<evidence type="ECO:0000250" key="1">
    <source>
        <dbReference type="UniProtKB" id="Q5T6F0"/>
    </source>
</evidence>
<evidence type="ECO:0000256" key="2">
    <source>
        <dbReference type="SAM" id="MobiDB-lite"/>
    </source>
</evidence>
<evidence type="ECO:0000305" key="3"/>
<gene>
    <name type="primary">dcaf12-a</name>
    <name type="synonym">wdr40a-a</name>
</gene>
<name>DC12A_XENLA</name>
<proteinExistence type="evidence at transcript level"/>
<accession>Q63ZP7</accession>
<comment type="function">
    <text evidence="1">Substrate-recognition component of a DCX (DDB1-CUL4-X-box) E3 ubiquitin-protein ligase complex of the DesCEND (destruction via C-end degrons) pathway, which recognizes a C-degron located at the extreme C terminus of target proteins, leading to their ubiquitination and degradation. The C-degron recognized by the DesCEND pathway is usually a motif of less than ten residues and can be present in full-length proteins, truncated proteins or proteolytically cleaved forms. The DCX(DCAF12) complex specifically recognizes proteins with a diglutamate (Glu-Glu) at the C-terminus leading to their ubiquitination and degradation. Also directly recognizes the C-terminal glutamate-leucine (Glu-Leu) degron as an alternative degron in proteins leading to their ubiquitination and degradation.</text>
</comment>
<comment type="pathway">
    <text evidence="1">Protein modification; protein ubiquitination.</text>
</comment>
<comment type="subunit">
    <text evidence="1">Component of the DCX(DCAF12) E3 ubiquitin ligase complex, at least composed of cul4 (cul4a or cul4b), ddb1, dcaf12 and rbx1.</text>
</comment>
<comment type="subcellular location">
    <subcellularLocation>
        <location evidence="1">Cytoplasm</location>
    </subcellularLocation>
    <subcellularLocation>
        <location evidence="1">Cytoplasm</location>
        <location evidence="1">Cytoskeleton</location>
        <location evidence="1">Microtubule organizing center</location>
        <location evidence="1">Centrosome</location>
    </subcellularLocation>
    <subcellularLocation>
        <location evidence="1">Nucleus</location>
    </subcellularLocation>
</comment>
<comment type="similarity">
    <text evidence="3">Belongs to the WD repeat DCAF12 family.</text>
</comment>
<keyword id="KW-0963">Cytoplasm</keyword>
<keyword id="KW-0206">Cytoskeleton</keyword>
<keyword id="KW-0539">Nucleus</keyword>
<keyword id="KW-1185">Reference proteome</keyword>
<keyword id="KW-0677">Repeat</keyword>
<keyword id="KW-0833">Ubl conjugation pathway</keyword>
<keyword id="KW-0853">WD repeat</keyword>
<protein>
    <recommendedName>
        <fullName evidence="3">DDB1- and CUL4-associated factor 12-A</fullName>
    </recommendedName>
    <alternativeName>
        <fullName>WD repeat-containing protein 40A-A</fullName>
    </alternativeName>
</protein>
<organism>
    <name type="scientific">Xenopus laevis</name>
    <name type="common">African clawed frog</name>
    <dbReference type="NCBI Taxonomy" id="8355"/>
    <lineage>
        <taxon>Eukaryota</taxon>
        <taxon>Metazoa</taxon>
        <taxon>Chordata</taxon>
        <taxon>Craniata</taxon>
        <taxon>Vertebrata</taxon>
        <taxon>Euteleostomi</taxon>
        <taxon>Amphibia</taxon>
        <taxon>Batrachia</taxon>
        <taxon>Anura</taxon>
        <taxon>Pipoidea</taxon>
        <taxon>Pipidae</taxon>
        <taxon>Xenopodinae</taxon>
        <taxon>Xenopus</taxon>
        <taxon>Xenopus</taxon>
    </lineage>
</organism>
<reference key="1">
    <citation type="submission" date="2004-09" db="EMBL/GenBank/DDBJ databases">
        <authorList>
            <consortium name="NIH - Xenopus Gene Collection (XGC) project"/>
        </authorList>
    </citation>
    <scope>NUCLEOTIDE SEQUENCE [LARGE SCALE MRNA]</scope>
    <source>
        <tissue>Kidney</tissue>
    </source>
</reference>